<feature type="chain" id="PRO_1000064406" description="tRNA (guanine-N(7)-)-methyltransferase">
    <location>
        <begin position="1"/>
        <end position="238"/>
    </location>
</feature>
<feature type="active site" evidence="1">
    <location>
        <position position="143"/>
    </location>
</feature>
<feature type="binding site" evidence="2">
    <location>
        <position position="68"/>
    </location>
    <ligand>
        <name>S-adenosyl-L-methionine</name>
        <dbReference type="ChEBI" id="CHEBI:59789"/>
    </ligand>
</feature>
<feature type="binding site" evidence="2">
    <location>
        <position position="93"/>
    </location>
    <ligand>
        <name>S-adenosyl-L-methionine</name>
        <dbReference type="ChEBI" id="CHEBI:59789"/>
    </ligand>
</feature>
<feature type="binding site" evidence="2">
    <location>
        <position position="120"/>
    </location>
    <ligand>
        <name>S-adenosyl-L-methionine</name>
        <dbReference type="ChEBI" id="CHEBI:59789"/>
    </ligand>
</feature>
<feature type="binding site" evidence="2">
    <location>
        <position position="143"/>
    </location>
    <ligand>
        <name>S-adenosyl-L-methionine</name>
        <dbReference type="ChEBI" id="CHEBI:59789"/>
    </ligand>
</feature>
<feature type="binding site" evidence="2">
    <location>
        <position position="147"/>
    </location>
    <ligand>
        <name>substrate</name>
    </ligand>
</feature>
<feature type="binding site" evidence="2">
    <location>
        <position position="179"/>
    </location>
    <ligand>
        <name>substrate</name>
    </ligand>
</feature>
<feature type="binding site" evidence="2">
    <location>
        <begin position="216"/>
        <end position="219"/>
    </location>
    <ligand>
        <name>substrate</name>
    </ligand>
</feature>
<sequence>MTEQNPAAEEQQSAPRRTIKSFVMRAGRMTEGQQRGLEQGWPKYGLELADGLRDFDEVFGRSAPRTFEIGFGMGHSTLEMAAAAPEQDFIGVEVHKPGVGALLSGLVSQKLTNVRVYSCDALEVLRDCVADASLDRVLLFFPDPWHKSRHHKRRIVQPAFAELVRRKLKVGGVLHMATDWEPYAEHMLEVMNVAPGYRNLAQDGRCVPRPTERPVTKFERRGERLGHGVWDLKFQRID</sequence>
<proteinExistence type="inferred from homology"/>
<comment type="function">
    <text evidence="2">Catalyzes the formation of N(7)-methylguanine at position 46 (m7G46) in tRNA.</text>
</comment>
<comment type="catalytic activity">
    <reaction evidence="2">
        <text>guanosine(46) in tRNA + S-adenosyl-L-methionine = N(7)-methylguanosine(46) in tRNA + S-adenosyl-L-homocysteine</text>
        <dbReference type="Rhea" id="RHEA:42708"/>
        <dbReference type="Rhea" id="RHEA-COMP:10188"/>
        <dbReference type="Rhea" id="RHEA-COMP:10189"/>
        <dbReference type="ChEBI" id="CHEBI:57856"/>
        <dbReference type="ChEBI" id="CHEBI:59789"/>
        <dbReference type="ChEBI" id="CHEBI:74269"/>
        <dbReference type="ChEBI" id="CHEBI:74480"/>
        <dbReference type="EC" id="2.1.1.33"/>
    </reaction>
</comment>
<comment type="pathway">
    <text evidence="2">tRNA modification; N(7)-methylguanine-tRNA biosynthesis.</text>
</comment>
<comment type="similarity">
    <text evidence="2">Belongs to the class I-like SAM-binding methyltransferase superfamily. TrmB family.</text>
</comment>
<evidence type="ECO:0000250" key="1"/>
<evidence type="ECO:0000255" key="2">
    <source>
        <dbReference type="HAMAP-Rule" id="MF_01057"/>
    </source>
</evidence>
<name>TRMB_STUS1</name>
<reference key="1">
    <citation type="journal article" date="2008" name="Proc. Natl. Acad. Sci. U.S.A.">
        <title>Nitrogen fixation island and rhizosphere competence traits in the genome of root-associated Pseudomonas stutzeri A1501.</title>
        <authorList>
            <person name="Yan Y."/>
            <person name="Yang J."/>
            <person name="Dou Y."/>
            <person name="Chen M."/>
            <person name="Ping S."/>
            <person name="Peng J."/>
            <person name="Lu W."/>
            <person name="Zhang W."/>
            <person name="Yao Z."/>
            <person name="Li H."/>
            <person name="Liu W."/>
            <person name="He S."/>
            <person name="Geng L."/>
            <person name="Zhang X."/>
            <person name="Yang F."/>
            <person name="Yu H."/>
            <person name="Zhan Y."/>
            <person name="Li D."/>
            <person name="Lin Z."/>
            <person name="Wang Y."/>
            <person name="Elmerich C."/>
            <person name="Lin M."/>
            <person name="Jin Q."/>
        </authorList>
    </citation>
    <scope>NUCLEOTIDE SEQUENCE [LARGE SCALE GENOMIC DNA]</scope>
    <source>
        <strain>A1501</strain>
    </source>
</reference>
<organism>
    <name type="scientific">Stutzerimonas stutzeri (strain A1501)</name>
    <name type="common">Pseudomonas stutzeri</name>
    <dbReference type="NCBI Taxonomy" id="379731"/>
    <lineage>
        <taxon>Bacteria</taxon>
        <taxon>Pseudomonadati</taxon>
        <taxon>Pseudomonadota</taxon>
        <taxon>Gammaproteobacteria</taxon>
        <taxon>Pseudomonadales</taxon>
        <taxon>Pseudomonadaceae</taxon>
        <taxon>Stutzerimonas</taxon>
    </lineage>
</organism>
<protein>
    <recommendedName>
        <fullName evidence="2">tRNA (guanine-N(7)-)-methyltransferase</fullName>
        <ecNumber evidence="2">2.1.1.33</ecNumber>
    </recommendedName>
    <alternativeName>
        <fullName evidence="2">tRNA (guanine(46)-N(7))-methyltransferase</fullName>
    </alternativeName>
    <alternativeName>
        <fullName evidence="2">tRNA(m7G46)-methyltransferase</fullName>
    </alternativeName>
</protein>
<accession>A4VRK4</accession>
<keyword id="KW-0489">Methyltransferase</keyword>
<keyword id="KW-1185">Reference proteome</keyword>
<keyword id="KW-0949">S-adenosyl-L-methionine</keyword>
<keyword id="KW-0808">Transferase</keyword>
<keyword id="KW-0819">tRNA processing</keyword>
<dbReference type="EC" id="2.1.1.33" evidence="2"/>
<dbReference type="EMBL" id="CP000304">
    <property type="protein sequence ID" value="ABP81605.1"/>
    <property type="molecule type" value="Genomic_DNA"/>
</dbReference>
<dbReference type="RefSeq" id="WP_011914987.1">
    <property type="nucleotide sequence ID" value="NC_009434.1"/>
</dbReference>
<dbReference type="SMR" id="A4VRK4"/>
<dbReference type="KEGG" id="psa:PST_3982"/>
<dbReference type="eggNOG" id="COG0220">
    <property type="taxonomic scope" value="Bacteria"/>
</dbReference>
<dbReference type="HOGENOM" id="CLU_050910_0_1_6"/>
<dbReference type="UniPathway" id="UPA00989"/>
<dbReference type="Proteomes" id="UP000000233">
    <property type="component" value="Chromosome"/>
</dbReference>
<dbReference type="GO" id="GO:0043527">
    <property type="term" value="C:tRNA methyltransferase complex"/>
    <property type="evidence" value="ECO:0007669"/>
    <property type="project" value="TreeGrafter"/>
</dbReference>
<dbReference type="GO" id="GO:0008176">
    <property type="term" value="F:tRNA (guanine(46)-N7)-methyltransferase activity"/>
    <property type="evidence" value="ECO:0007669"/>
    <property type="project" value="UniProtKB-UniRule"/>
</dbReference>
<dbReference type="CDD" id="cd02440">
    <property type="entry name" value="AdoMet_MTases"/>
    <property type="match status" value="1"/>
</dbReference>
<dbReference type="Gene3D" id="3.40.50.150">
    <property type="entry name" value="Vaccinia Virus protein VP39"/>
    <property type="match status" value="1"/>
</dbReference>
<dbReference type="HAMAP" id="MF_01057">
    <property type="entry name" value="tRNA_methyltr_TrmB"/>
    <property type="match status" value="1"/>
</dbReference>
<dbReference type="InterPro" id="IPR029063">
    <property type="entry name" value="SAM-dependent_MTases_sf"/>
</dbReference>
<dbReference type="InterPro" id="IPR003358">
    <property type="entry name" value="tRNA_(Gua-N-7)_MeTrfase_Trmb"/>
</dbReference>
<dbReference type="InterPro" id="IPR055361">
    <property type="entry name" value="tRNA_methyltr_TrmB_bact"/>
</dbReference>
<dbReference type="NCBIfam" id="TIGR00091">
    <property type="entry name" value="tRNA (guanosine(46)-N7)-methyltransferase TrmB"/>
    <property type="match status" value="1"/>
</dbReference>
<dbReference type="PANTHER" id="PTHR23417">
    <property type="entry name" value="3-DEOXY-D-MANNO-OCTULOSONIC-ACID TRANSFERASE/TRNA GUANINE-N 7 - -METHYLTRANSFERASE"/>
    <property type="match status" value="1"/>
</dbReference>
<dbReference type="PANTHER" id="PTHR23417:SF14">
    <property type="entry name" value="PENTACOTRIPEPTIDE-REPEAT REGION OF PRORP DOMAIN-CONTAINING PROTEIN"/>
    <property type="match status" value="1"/>
</dbReference>
<dbReference type="Pfam" id="PF02390">
    <property type="entry name" value="Methyltransf_4"/>
    <property type="match status" value="1"/>
</dbReference>
<dbReference type="SUPFAM" id="SSF53335">
    <property type="entry name" value="S-adenosyl-L-methionine-dependent methyltransferases"/>
    <property type="match status" value="1"/>
</dbReference>
<dbReference type="PROSITE" id="PS51625">
    <property type="entry name" value="SAM_MT_TRMB"/>
    <property type="match status" value="1"/>
</dbReference>
<gene>
    <name evidence="2" type="primary">trmB</name>
    <name type="ordered locus">PST_3982</name>
</gene>